<keyword id="KW-0963">Cytoplasm</keyword>
<keyword id="KW-0275">Fatty acid biosynthesis</keyword>
<keyword id="KW-0276">Fatty acid metabolism</keyword>
<keyword id="KW-0444">Lipid biosynthesis</keyword>
<keyword id="KW-0443">Lipid metabolism</keyword>
<keyword id="KW-0596">Phosphopantetheine</keyword>
<keyword id="KW-0597">Phosphoprotein</keyword>
<dbReference type="EMBL" id="CP001172">
    <property type="protein sequence ID" value="ACJ57349.1"/>
    <property type="molecule type" value="Genomic_DNA"/>
</dbReference>
<dbReference type="RefSeq" id="WP_001279871.1">
    <property type="nucleotide sequence ID" value="NZ_CP001172.1"/>
</dbReference>
<dbReference type="SMR" id="B7GYR8"/>
<dbReference type="GeneID" id="92892750"/>
<dbReference type="HOGENOM" id="CLU_108696_5_1_6"/>
<dbReference type="UniPathway" id="UPA00094"/>
<dbReference type="Proteomes" id="UP000006924">
    <property type="component" value="Chromosome"/>
</dbReference>
<dbReference type="GO" id="GO:0005829">
    <property type="term" value="C:cytosol"/>
    <property type="evidence" value="ECO:0007669"/>
    <property type="project" value="TreeGrafter"/>
</dbReference>
<dbReference type="GO" id="GO:0016020">
    <property type="term" value="C:membrane"/>
    <property type="evidence" value="ECO:0007669"/>
    <property type="project" value="GOC"/>
</dbReference>
<dbReference type="GO" id="GO:0000035">
    <property type="term" value="F:acyl binding"/>
    <property type="evidence" value="ECO:0007669"/>
    <property type="project" value="TreeGrafter"/>
</dbReference>
<dbReference type="GO" id="GO:0000036">
    <property type="term" value="F:acyl carrier activity"/>
    <property type="evidence" value="ECO:0007669"/>
    <property type="project" value="UniProtKB-UniRule"/>
</dbReference>
<dbReference type="GO" id="GO:0009245">
    <property type="term" value="P:lipid A biosynthetic process"/>
    <property type="evidence" value="ECO:0007669"/>
    <property type="project" value="TreeGrafter"/>
</dbReference>
<dbReference type="FunFam" id="1.10.1200.10:FF:000001">
    <property type="entry name" value="Acyl carrier protein"/>
    <property type="match status" value="1"/>
</dbReference>
<dbReference type="Gene3D" id="1.10.1200.10">
    <property type="entry name" value="ACP-like"/>
    <property type="match status" value="1"/>
</dbReference>
<dbReference type="HAMAP" id="MF_01217">
    <property type="entry name" value="Acyl_carrier"/>
    <property type="match status" value="1"/>
</dbReference>
<dbReference type="InterPro" id="IPR003231">
    <property type="entry name" value="ACP"/>
</dbReference>
<dbReference type="InterPro" id="IPR036736">
    <property type="entry name" value="ACP-like_sf"/>
</dbReference>
<dbReference type="InterPro" id="IPR009081">
    <property type="entry name" value="PP-bd_ACP"/>
</dbReference>
<dbReference type="InterPro" id="IPR006162">
    <property type="entry name" value="Ppantetheine_attach_site"/>
</dbReference>
<dbReference type="NCBIfam" id="TIGR00517">
    <property type="entry name" value="acyl_carrier"/>
    <property type="match status" value="1"/>
</dbReference>
<dbReference type="NCBIfam" id="NF002148">
    <property type="entry name" value="PRK00982.1-2"/>
    <property type="match status" value="1"/>
</dbReference>
<dbReference type="NCBIfam" id="NF002149">
    <property type="entry name" value="PRK00982.1-3"/>
    <property type="match status" value="1"/>
</dbReference>
<dbReference type="NCBIfam" id="NF002150">
    <property type="entry name" value="PRK00982.1-4"/>
    <property type="match status" value="1"/>
</dbReference>
<dbReference type="NCBIfam" id="NF002151">
    <property type="entry name" value="PRK00982.1-5"/>
    <property type="match status" value="1"/>
</dbReference>
<dbReference type="PANTHER" id="PTHR20863">
    <property type="entry name" value="ACYL CARRIER PROTEIN"/>
    <property type="match status" value="1"/>
</dbReference>
<dbReference type="PANTHER" id="PTHR20863:SF76">
    <property type="entry name" value="CARRIER DOMAIN-CONTAINING PROTEIN"/>
    <property type="match status" value="1"/>
</dbReference>
<dbReference type="Pfam" id="PF00550">
    <property type="entry name" value="PP-binding"/>
    <property type="match status" value="1"/>
</dbReference>
<dbReference type="SUPFAM" id="SSF47336">
    <property type="entry name" value="ACP-like"/>
    <property type="match status" value="1"/>
</dbReference>
<dbReference type="PROSITE" id="PS50075">
    <property type="entry name" value="CARRIER"/>
    <property type="match status" value="1"/>
</dbReference>
<dbReference type="PROSITE" id="PS00012">
    <property type="entry name" value="PHOSPHOPANTETHEINE"/>
    <property type="match status" value="1"/>
</dbReference>
<comment type="function">
    <text evidence="1">Carrier of the growing fatty acid chain in fatty acid biosynthesis.</text>
</comment>
<comment type="pathway">
    <text evidence="1">Lipid metabolism; fatty acid biosynthesis.</text>
</comment>
<comment type="subcellular location">
    <subcellularLocation>
        <location evidence="1">Cytoplasm</location>
    </subcellularLocation>
</comment>
<comment type="PTM">
    <text evidence="1">4'-phosphopantetheine is transferred from CoA to a specific serine of apo-ACP by AcpS. This modification is essential for activity because fatty acids are bound in thioester linkage to the sulfhydryl of the prosthetic group.</text>
</comment>
<comment type="similarity">
    <text evidence="1">Belongs to the acyl carrier protein (ACP) family.</text>
</comment>
<feature type="chain" id="PRO_1000138990" description="Acyl carrier protein">
    <location>
        <begin position="1"/>
        <end position="78"/>
    </location>
</feature>
<feature type="domain" description="Carrier" evidence="2">
    <location>
        <begin position="2"/>
        <end position="77"/>
    </location>
</feature>
<feature type="modified residue" description="O-(pantetheine 4'-phosphoryl)serine" evidence="2">
    <location>
        <position position="37"/>
    </location>
</feature>
<proteinExistence type="inferred from homology"/>
<sequence>MSDIEQRVKQAVAEQLGLKAEEIKNEASFMDDLGADSLDLVELVMSFENDFDITIPDEDSNEITTVQSAIDYVTKKLG</sequence>
<evidence type="ECO:0000255" key="1">
    <source>
        <dbReference type="HAMAP-Rule" id="MF_01217"/>
    </source>
</evidence>
<evidence type="ECO:0000255" key="2">
    <source>
        <dbReference type="PROSITE-ProRule" id="PRU00258"/>
    </source>
</evidence>
<protein>
    <recommendedName>
        <fullName evidence="1">Acyl carrier protein</fullName>
        <shortName evidence="1">ACP</shortName>
    </recommendedName>
</protein>
<name>ACP_ACIB3</name>
<gene>
    <name evidence="1" type="primary">acpP</name>
    <name type="ordered locus">ABBFA_002793</name>
</gene>
<organism>
    <name type="scientific">Acinetobacter baumannii (strain AB307-0294)</name>
    <dbReference type="NCBI Taxonomy" id="557600"/>
    <lineage>
        <taxon>Bacteria</taxon>
        <taxon>Pseudomonadati</taxon>
        <taxon>Pseudomonadota</taxon>
        <taxon>Gammaproteobacteria</taxon>
        <taxon>Moraxellales</taxon>
        <taxon>Moraxellaceae</taxon>
        <taxon>Acinetobacter</taxon>
        <taxon>Acinetobacter calcoaceticus/baumannii complex</taxon>
    </lineage>
</organism>
<reference key="1">
    <citation type="journal article" date="2008" name="J. Bacteriol.">
        <title>Comparative genome sequence analysis of multidrug-resistant Acinetobacter baumannii.</title>
        <authorList>
            <person name="Adams M.D."/>
            <person name="Goglin K."/>
            <person name="Molyneaux N."/>
            <person name="Hujer K.M."/>
            <person name="Lavender H."/>
            <person name="Jamison J.J."/>
            <person name="MacDonald I.J."/>
            <person name="Martin K.M."/>
            <person name="Russo T."/>
            <person name="Campagnari A.A."/>
            <person name="Hujer A.M."/>
            <person name="Bonomo R.A."/>
            <person name="Gill S.R."/>
        </authorList>
    </citation>
    <scope>NUCLEOTIDE SEQUENCE [LARGE SCALE GENOMIC DNA]</scope>
    <source>
        <strain>AB307-0294</strain>
    </source>
</reference>
<accession>B7GYR8</accession>